<accession>Q8RAC8</accession>
<keyword id="KW-0963">Cytoplasm</keyword>
<keyword id="KW-0269">Exonuclease</keyword>
<keyword id="KW-0378">Hydrolase</keyword>
<keyword id="KW-0540">Nuclease</keyword>
<keyword id="KW-1185">Reference proteome</keyword>
<protein>
    <recommendedName>
        <fullName evidence="1">Exodeoxyribonuclease 7 small subunit</fullName>
        <ecNumber evidence="1">3.1.11.6</ecNumber>
    </recommendedName>
    <alternativeName>
        <fullName evidence="1">Exodeoxyribonuclease VII small subunit</fullName>
        <shortName evidence="1">Exonuclease VII small subunit</shortName>
    </alternativeName>
</protein>
<evidence type="ECO:0000255" key="1">
    <source>
        <dbReference type="HAMAP-Rule" id="MF_00337"/>
    </source>
</evidence>
<proteinExistence type="inferred from homology"/>
<comment type="function">
    <text evidence="1">Bidirectionally degrades single-stranded DNA into large acid-insoluble oligonucleotides, which are then degraded further into small acid-soluble oligonucleotides.</text>
</comment>
<comment type="catalytic activity">
    <reaction evidence="1">
        <text>Exonucleolytic cleavage in either 5'- to 3'- or 3'- to 5'-direction to yield nucleoside 5'-phosphates.</text>
        <dbReference type="EC" id="3.1.11.6"/>
    </reaction>
</comment>
<comment type="subunit">
    <text evidence="1">Heterooligomer composed of large and small subunits.</text>
</comment>
<comment type="subcellular location">
    <subcellularLocation>
        <location evidence="1">Cytoplasm</location>
    </subcellularLocation>
</comment>
<comment type="similarity">
    <text evidence="1">Belongs to the XseB family.</text>
</comment>
<organism>
    <name type="scientific">Caldanaerobacter subterraneus subsp. tengcongensis (strain DSM 15242 / JCM 11007 / NBRC 100824 / MB4)</name>
    <name type="common">Thermoanaerobacter tengcongensis</name>
    <dbReference type="NCBI Taxonomy" id="273068"/>
    <lineage>
        <taxon>Bacteria</taxon>
        <taxon>Bacillati</taxon>
        <taxon>Bacillota</taxon>
        <taxon>Clostridia</taxon>
        <taxon>Thermoanaerobacterales</taxon>
        <taxon>Thermoanaerobacteraceae</taxon>
        <taxon>Caldanaerobacter</taxon>
    </lineage>
</organism>
<name>EX7S_CALS4</name>
<sequence>MEKEFNFEEDLKRLEEIVDTLEKGNLMLEESFNLFKEGVEISKRLEKMLKEVEGKITMLISEDEEIEFKEEENNV</sequence>
<dbReference type="EC" id="3.1.11.6" evidence="1"/>
<dbReference type="EMBL" id="AE008691">
    <property type="protein sequence ID" value="AAM24519.1"/>
    <property type="molecule type" value="Genomic_DNA"/>
</dbReference>
<dbReference type="RefSeq" id="WP_011025609.1">
    <property type="nucleotide sequence ID" value="NZ_JANUCV010000001.1"/>
</dbReference>
<dbReference type="SMR" id="Q8RAC8"/>
<dbReference type="STRING" id="273068.TTE1295"/>
<dbReference type="KEGG" id="tte:TTE1295"/>
<dbReference type="eggNOG" id="COG1722">
    <property type="taxonomic scope" value="Bacteria"/>
</dbReference>
<dbReference type="HOGENOM" id="CLU_145918_3_2_9"/>
<dbReference type="OrthoDB" id="1697399at2"/>
<dbReference type="Proteomes" id="UP000000555">
    <property type="component" value="Chromosome"/>
</dbReference>
<dbReference type="GO" id="GO:0005829">
    <property type="term" value="C:cytosol"/>
    <property type="evidence" value="ECO:0007669"/>
    <property type="project" value="TreeGrafter"/>
</dbReference>
<dbReference type="GO" id="GO:0009318">
    <property type="term" value="C:exodeoxyribonuclease VII complex"/>
    <property type="evidence" value="ECO:0007669"/>
    <property type="project" value="InterPro"/>
</dbReference>
<dbReference type="GO" id="GO:0008855">
    <property type="term" value="F:exodeoxyribonuclease VII activity"/>
    <property type="evidence" value="ECO:0007669"/>
    <property type="project" value="UniProtKB-UniRule"/>
</dbReference>
<dbReference type="GO" id="GO:0006308">
    <property type="term" value="P:DNA catabolic process"/>
    <property type="evidence" value="ECO:0007669"/>
    <property type="project" value="UniProtKB-UniRule"/>
</dbReference>
<dbReference type="Gene3D" id="1.10.287.1040">
    <property type="entry name" value="Exonuclease VII, small subunit"/>
    <property type="match status" value="1"/>
</dbReference>
<dbReference type="HAMAP" id="MF_00337">
    <property type="entry name" value="Exonuc_7_S"/>
    <property type="match status" value="1"/>
</dbReference>
<dbReference type="InterPro" id="IPR003761">
    <property type="entry name" value="Exonuc_VII_S"/>
</dbReference>
<dbReference type="InterPro" id="IPR037004">
    <property type="entry name" value="Exonuc_VII_ssu_sf"/>
</dbReference>
<dbReference type="NCBIfam" id="TIGR01280">
    <property type="entry name" value="xseB"/>
    <property type="match status" value="1"/>
</dbReference>
<dbReference type="PANTHER" id="PTHR34137">
    <property type="entry name" value="EXODEOXYRIBONUCLEASE 7 SMALL SUBUNIT"/>
    <property type="match status" value="1"/>
</dbReference>
<dbReference type="PANTHER" id="PTHR34137:SF1">
    <property type="entry name" value="EXODEOXYRIBONUCLEASE 7 SMALL SUBUNIT"/>
    <property type="match status" value="1"/>
</dbReference>
<dbReference type="Pfam" id="PF02609">
    <property type="entry name" value="Exonuc_VII_S"/>
    <property type="match status" value="1"/>
</dbReference>
<dbReference type="PIRSF" id="PIRSF006488">
    <property type="entry name" value="Exonuc_VII_S"/>
    <property type="match status" value="1"/>
</dbReference>
<dbReference type="SUPFAM" id="SSF116842">
    <property type="entry name" value="XseB-like"/>
    <property type="match status" value="1"/>
</dbReference>
<gene>
    <name evidence="1" type="primary">xseB</name>
    <name type="ordered locus">TTE1295</name>
</gene>
<feature type="chain" id="PRO_0000207027" description="Exodeoxyribonuclease 7 small subunit">
    <location>
        <begin position="1"/>
        <end position="75"/>
    </location>
</feature>
<reference key="1">
    <citation type="journal article" date="2002" name="Genome Res.">
        <title>A complete sequence of the T. tengcongensis genome.</title>
        <authorList>
            <person name="Bao Q."/>
            <person name="Tian Y."/>
            <person name="Li W."/>
            <person name="Xu Z."/>
            <person name="Xuan Z."/>
            <person name="Hu S."/>
            <person name="Dong W."/>
            <person name="Yang J."/>
            <person name="Chen Y."/>
            <person name="Xue Y."/>
            <person name="Xu Y."/>
            <person name="Lai X."/>
            <person name="Huang L."/>
            <person name="Dong X."/>
            <person name="Ma Y."/>
            <person name="Ling L."/>
            <person name="Tan H."/>
            <person name="Chen R."/>
            <person name="Wang J."/>
            <person name="Yu J."/>
            <person name="Yang H."/>
        </authorList>
    </citation>
    <scope>NUCLEOTIDE SEQUENCE [LARGE SCALE GENOMIC DNA]</scope>
    <source>
        <strain>DSM 15242 / JCM 11007 / NBRC 100824 / MB4</strain>
    </source>
</reference>